<gene>
    <name evidence="1" type="primary">pcm</name>
    <name type="ordered locus">Bpet2548</name>
</gene>
<dbReference type="EC" id="2.1.1.77" evidence="1"/>
<dbReference type="EMBL" id="AM902716">
    <property type="protein sequence ID" value="CAP42890.1"/>
    <property type="molecule type" value="Genomic_DNA"/>
</dbReference>
<dbReference type="SMR" id="A9IP04"/>
<dbReference type="STRING" id="94624.Bpet2548"/>
<dbReference type="KEGG" id="bpt:Bpet2548"/>
<dbReference type="eggNOG" id="COG2518">
    <property type="taxonomic scope" value="Bacteria"/>
</dbReference>
<dbReference type="Proteomes" id="UP000001225">
    <property type="component" value="Chromosome"/>
</dbReference>
<dbReference type="GO" id="GO:0005737">
    <property type="term" value="C:cytoplasm"/>
    <property type="evidence" value="ECO:0007669"/>
    <property type="project" value="UniProtKB-SubCell"/>
</dbReference>
<dbReference type="GO" id="GO:0004719">
    <property type="term" value="F:protein-L-isoaspartate (D-aspartate) O-methyltransferase activity"/>
    <property type="evidence" value="ECO:0007669"/>
    <property type="project" value="UniProtKB-UniRule"/>
</dbReference>
<dbReference type="GO" id="GO:0032259">
    <property type="term" value="P:methylation"/>
    <property type="evidence" value="ECO:0007669"/>
    <property type="project" value="UniProtKB-KW"/>
</dbReference>
<dbReference type="GO" id="GO:0036211">
    <property type="term" value="P:protein modification process"/>
    <property type="evidence" value="ECO:0007669"/>
    <property type="project" value="UniProtKB-UniRule"/>
</dbReference>
<dbReference type="GO" id="GO:0030091">
    <property type="term" value="P:protein repair"/>
    <property type="evidence" value="ECO:0007669"/>
    <property type="project" value="UniProtKB-UniRule"/>
</dbReference>
<dbReference type="CDD" id="cd02440">
    <property type="entry name" value="AdoMet_MTases"/>
    <property type="match status" value="1"/>
</dbReference>
<dbReference type="FunFam" id="3.40.50.150:FF:000010">
    <property type="entry name" value="Protein-L-isoaspartate O-methyltransferase"/>
    <property type="match status" value="1"/>
</dbReference>
<dbReference type="Gene3D" id="3.40.50.150">
    <property type="entry name" value="Vaccinia Virus protein VP39"/>
    <property type="match status" value="1"/>
</dbReference>
<dbReference type="HAMAP" id="MF_00090">
    <property type="entry name" value="PIMT"/>
    <property type="match status" value="1"/>
</dbReference>
<dbReference type="InterPro" id="IPR000682">
    <property type="entry name" value="PCMT"/>
</dbReference>
<dbReference type="InterPro" id="IPR029063">
    <property type="entry name" value="SAM-dependent_MTases_sf"/>
</dbReference>
<dbReference type="NCBIfam" id="TIGR00080">
    <property type="entry name" value="pimt"/>
    <property type="match status" value="1"/>
</dbReference>
<dbReference type="NCBIfam" id="NF001453">
    <property type="entry name" value="PRK00312.1"/>
    <property type="match status" value="1"/>
</dbReference>
<dbReference type="PANTHER" id="PTHR11579">
    <property type="entry name" value="PROTEIN-L-ISOASPARTATE O-METHYLTRANSFERASE"/>
    <property type="match status" value="1"/>
</dbReference>
<dbReference type="PANTHER" id="PTHR11579:SF0">
    <property type="entry name" value="PROTEIN-L-ISOASPARTATE(D-ASPARTATE) O-METHYLTRANSFERASE"/>
    <property type="match status" value="1"/>
</dbReference>
<dbReference type="Pfam" id="PF01135">
    <property type="entry name" value="PCMT"/>
    <property type="match status" value="1"/>
</dbReference>
<dbReference type="SUPFAM" id="SSF53335">
    <property type="entry name" value="S-adenosyl-L-methionine-dependent methyltransferases"/>
    <property type="match status" value="1"/>
</dbReference>
<dbReference type="PROSITE" id="PS01279">
    <property type="entry name" value="PCMT"/>
    <property type="match status" value="1"/>
</dbReference>
<organism>
    <name type="scientific">Bordetella petrii (strain ATCC BAA-461 / DSM 12804 / CCUG 43448)</name>
    <dbReference type="NCBI Taxonomy" id="340100"/>
    <lineage>
        <taxon>Bacteria</taxon>
        <taxon>Pseudomonadati</taxon>
        <taxon>Pseudomonadota</taxon>
        <taxon>Betaproteobacteria</taxon>
        <taxon>Burkholderiales</taxon>
        <taxon>Alcaligenaceae</taxon>
        <taxon>Bordetella</taxon>
    </lineage>
</organism>
<comment type="function">
    <text evidence="1">Catalyzes the methyl esterification of L-isoaspartyl residues in peptides and proteins that result from spontaneous decomposition of normal L-aspartyl and L-asparaginyl residues. It plays a role in the repair and/or degradation of damaged proteins.</text>
</comment>
<comment type="catalytic activity">
    <reaction evidence="1">
        <text>[protein]-L-isoaspartate + S-adenosyl-L-methionine = [protein]-L-isoaspartate alpha-methyl ester + S-adenosyl-L-homocysteine</text>
        <dbReference type="Rhea" id="RHEA:12705"/>
        <dbReference type="Rhea" id="RHEA-COMP:12143"/>
        <dbReference type="Rhea" id="RHEA-COMP:12144"/>
        <dbReference type="ChEBI" id="CHEBI:57856"/>
        <dbReference type="ChEBI" id="CHEBI:59789"/>
        <dbReference type="ChEBI" id="CHEBI:90596"/>
        <dbReference type="ChEBI" id="CHEBI:90598"/>
        <dbReference type="EC" id="2.1.1.77"/>
    </reaction>
</comment>
<comment type="subcellular location">
    <subcellularLocation>
        <location evidence="1">Cytoplasm</location>
    </subcellularLocation>
</comment>
<comment type="similarity">
    <text evidence="1">Belongs to the methyltransferase superfamily. L-isoaspartyl/D-aspartyl protein methyltransferase family.</text>
</comment>
<protein>
    <recommendedName>
        <fullName evidence="1">Protein-L-isoaspartate O-methyltransferase</fullName>
        <ecNumber evidence="1">2.1.1.77</ecNumber>
    </recommendedName>
    <alternativeName>
        <fullName evidence="1">L-isoaspartyl protein carboxyl methyltransferase</fullName>
    </alternativeName>
    <alternativeName>
        <fullName evidence="1">Protein L-isoaspartyl methyltransferase</fullName>
    </alternativeName>
    <alternativeName>
        <fullName evidence="1">Protein-beta-aspartate methyltransferase</fullName>
        <shortName evidence="1">PIMT</shortName>
    </alternativeName>
</protein>
<feature type="chain" id="PRO_0000351821" description="Protein-L-isoaspartate O-methyltransferase">
    <location>
        <begin position="1"/>
        <end position="271"/>
    </location>
</feature>
<feature type="region of interest" description="Disordered" evidence="2">
    <location>
        <begin position="1"/>
        <end position="60"/>
    </location>
</feature>
<feature type="compositionally biased region" description="Pro residues" evidence="2">
    <location>
        <begin position="1"/>
        <end position="15"/>
    </location>
</feature>
<feature type="compositionally biased region" description="Low complexity" evidence="2">
    <location>
        <begin position="39"/>
        <end position="49"/>
    </location>
</feature>
<feature type="active site" evidence="1">
    <location>
        <position position="119"/>
    </location>
</feature>
<proteinExistence type="inferred from homology"/>
<reference key="1">
    <citation type="journal article" date="2008" name="BMC Genomics">
        <title>The missing link: Bordetella petrii is endowed with both the metabolic versatility of environmental bacteria and virulence traits of pathogenic Bordetellae.</title>
        <authorList>
            <person name="Gross R."/>
            <person name="Guzman C.A."/>
            <person name="Sebaihia M."/>
            <person name="Martin dos Santos V.A.P."/>
            <person name="Pieper D.H."/>
            <person name="Koebnik R."/>
            <person name="Lechner M."/>
            <person name="Bartels D."/>
            <person name="Buhrmester J."/>
            <person name="Choudhuri J.V."/>
            <person name="Ebensen T."/>
            <person name="Gaigalat L."/>
            <person name="Herrmann S."/>
            <person name="Khachane A.N."/>
            <person name="Larisch C."/>
            <person name="Link S."/>
            <person name="Linke B."/>
            <person name="Meyer F."/>
            <person name="Mormann S."/>
            <person name="Nakunst D."/>
            <person name="Rueckert C."/>
            <person name="Schneiker-Bekel S."/>
            <person name="Schulze K."/>
            <person name="Voerholter F.-J."/>
            <person name="Yevsa T."/>
            <person name="Engle J.T."/>
            <person name="Goldman W.E."/>
            <person name="Puehler A."/>
            <person name="Goebel U.B."/>
            <person name="Goesmann A."/>
            <person name="Bloecker H."/>
            <person name="Kaiser O."/>
            <person name="Martinez-Arias R."/>
        </authorList>
    </citation>
    <scope>NUCLEOTIDE SEQUENCE [LARGE SCALE GENOMIC DNA]</scope>
    <source>
        <strain>ATCC BAA-461 / DSM 12804 / CCUG 43448</strain>
    </source>
</reference>
<sequence>MRKPVTPPGNPPRPRSPGYGSTSLAPGITAANSNTRISPPTLARPAPAAGAGGQGGNLGLNSDRLRHAMVQRLRTQGIVDERVLNAMAAVPRHLFVDEALASRAYEDAALPIGHSQTISQPWVVARMIAAACEDRNPTRVLEVGAGCGYQAAVLAQFVREVHAIERIRGLFELARGHLRALRLATRVRLIHGDGMLGLPGVAPFDAIVVAAAGLAIPQALLDQLAPGGRLIAPEGASNQRLVLIERTGTASWKRTELEAVRFVPLRAGIQS</sequence>
<accession>A9IP04</accession>
<keyword id="KW-0963">Cytoplasm</keyword>
<keyword id="KW-0489">Methyltransferase</keyword>
<keyword id="KW-0949">S-adenosyl-L-methionine</keyword>
<keyword id="KW-0808">Transferase</keyword>
<evidence type="ECO:0000255" key="1">
    <source>
        <dbReference type="HAMAP-Rule" id="MF_00090"/>
    </source>
</evidence>
<evidence type="ECO:0000256" key="2">
    <source>
        <dbReference type="SAM" id="MobiDB-lite"/>
    </source>
</evidence>
<name>PIMT_BORPD</name>